<proteinExistence type="inferred from homology"/>
<reference key="1">
    <citation type="submission" date="2007-10" db="EMBL/GenBank/DDBJ databases">
        <title>Complete sequence of Methanococcus maripaludis C6.</title>
        <authorList>
            <consortium name="US DOE Joint Genome Institute"/>
            <person name="Copeland A."/>
            <person name="Lucas S."/>
            <person name="Lapidus A."/>
            <person name="Barry K."/>
            <person name="Glavina del Rio T."/>
            <person name="Dalin E."/>
            <person name="Tice H."/>
            <person name="Pitluck S."/>
            <person name="Clum A."/>
            <person name="Schmutz J."/>
            <person name="Larimer F."/>
            <person name="Land M."/>
            <person name="Hauser L."/>
            <person name="Kyrpides N."/>
            <person name="Mikhailova N."/>
            <person name="Sieprawska-Lupa M."/>
            <person name="Whitman W.B."/>
            <person name="Richardson P."/>
        </authorList>
    </citation>
    <scope>NUCLEOTIDE SEQUENCE [LARGE SCALE GENOMIC DNA]</scope>
    <source>
        <strain>C6 / ATCC BAA-1332</strain>
    </source>
</reference>
<keyword id="KW-0067">ATP-binding</keyword>
<keyword id="KW-0436">Ligase</keyword>
<keyword id="KW-0460">Magnesium</keyword>
<keyword id="KW-0464">Manganese</keyword>
<keyword id="KW-0479">Metal-binding</keyword>
<keyword id="KW-0547">Nucleotide-binding</keyword>
<keyword id="KW-0658">Purine biosynthesis</keyword>
<gene>
    <name evidence="2" type="primary">purP</name>
    <name type="ordered locus">MmarC6_1300</name>
</gene>
<comment type="function">
    <text evidence="2">Catalyzes the ATP- and formate-dependent formylation of 5-aminoimidazole-4-carboxamide-1-beta-d-ribofuranosyl 5'-monophosphate (AICAR) to 5-formaminoimidazole-4-carboxamide-1-beta-d-ribofuranosyl 5'-monophosphate (FAICAR) in the absence of folates.</text>
</comment>
<comment type="catalytic activity">
    <reaction evidence="2">
        <text>5-amino-1-(5-phospho-beta-D-ribosyl)imidazole-4-carboxamide + formate + ATP = 5-formamido-1-(5-phospho-D-ribosyl)imidazole-4-carboxamide + ADP + phosphate</text>
        <dbReference type="Rhea" id="RHEA:24836"/>
        <dbReference type="ChEBI" id="CHEBI:15740"/>
        <dbReference type="ChEBI" id="CHEBI:30616"/>
        <dbReference type="ChEBI" id="CHEBI:43474"/>
        <dbReference type="ChEBI" id="CHEBI:58467"/>
        <dbReference type="ChEBI" id="CHEBI:58475"/>
        <dbReference type="ChEBI" id="CHEBI:456216"/>
        <dbReference type="EC" id="6.3.4.23"/>
    </reaction>
</comment>
<comment type="cofactor">
    <cofactor evidence="1">
        <name>Mg(2+)</name>
        <dbReference type="ChEBI" id="CHEBI:18420"/>
    </cofactor>
    <cofactor evidence="1">
        <name>Mn(2+)</name>
        <dbReference type="ChEBI" id="CHEBI:29035"/>
    </cofactor>
    <text evidence="1">Binds 1 Mg(2+) or Mn(2+) ion per subunit.</text>
</comment>
<comment type="pathway">
    <text evidence="2">Purine metabolism; IMP biosynthesis via de novo pathway; 5-formamido-1-(5-phospho-D-ribosyl)imidazole-4-carboxamide from 5-amino-1-(5-phospho-D-ribosyl)imidazole-4-carboxamide (formate route): step 1/1.</text>
</comment>
<comment type="similarity">
    <text evidence="2">Belongs to the phosphohexose mutase family.</text>
</comment>
<evidence type="ECO:0000250" key="1"/>
<evidence type="ECO:0000255" key="2">
    <source>
        <dbReference type="HAMAP-Rule" id="MF_01163"/>
    </source>
</evidence>
<dbReference type="EC" id="6.3.4.23" evidence="2"/>
<dbReference type="EMBL" id="CP000867">
    <property type="protein sequence ID" value="ABX02113.1"/>
    <property type="molecule type" value="Genomic_DNA"/>
</dbReference>
<dbReference type="SMR" id="A9A9U0"/>
<dbReference type="STRING" id="444158.MmarC6_1300"/>
<dbReference type="KEGG" id="mmx:MmarC6_1300"/>
<dbReference type="eggNOG" id="arCOG04346">
    <property type="taxonomic scope" value="Archaea"/>
</dbReference>
<dbReference type="HOGENOM" id="CLU_065084_0_0_2"/>
<dbReference type="OrthoDB" id="98133at2157"/>
<dbReference type="PhylomeDB" id="A9A9U0"/>
<dbReference type="UniPathway" id="UPA00074">
    <property type="reaction ID" value="UER00134"/>
</dbReference>
<dbReference type="GO" id="GO:0005524">
    <property type="term" value="F:ATP binding"/>
    <property type="evidence" value="ECO:0007669"/>
    <property type="project" value="UniProtKB-KW"/>
</dbReference>
<dbReference type="GO" id="GO:0016879">
    <property type="term" value="F:ligase activity, forming carbon-nitrogen bonds"/>
    <property type="evidence" value="ECO:0007669"/>
    <property type="project" value="UniProtKB-UniRule"/>
</dbReference>
<dbReference type="GO" id="GO:0000287">
    <property type="term" value="F:magnesium ion binding"/>
    <property type="evidence" value="ECO:0007669"/>
    <property type="project" value="InterPro"/>
</dbReference>
<dbReference type="GO" id="GO:0006189">
    <property type="term" value="P:'de novo' IMP biosynthetic process"/>
    <property type="evidence" value="ECO:0007669"/>
    <property type="project" value="UniProtKB-UniRule"/>
</dbReference>
<dbReference type="Gene3D" id="3.40.50.20">
    <property type="match status" value="1"/>
</dbReference>
<dbReference type="Gene3D" id="3.30.1490.20">
    <property type="entry name" value="ATP-grasp fold, A domain"/>
    <property type="match status" value="1"/>
</dbReference>
<dbReference type="Gene3D" id="3.30.470.20">
    <property type="entry name" value="ATP-grasp fold, B domain"/>
    <property type="match status" value="1"/>
</dbReference>
<dbReference type="HAMAP" id="MF_01163">
    <property type="entry name" value="IMP_biosynth_PurP"/>
    <property type="match status" value="1"/>
</dbReference>
<dbReference type="InterPro" id="IPR013815">
    <property type="entry name" value="ATP_grasp_subdomain_1"/>
</dbReference>
<dbReference type="InterPro" id="IPR023656">
    <property type="entry name" value="IMP_biosynth_PurP"/>
</dbReference>
<dbReference type="InterPro" id="IPR009720">
    <property type="entry name" value="IMP_biosynth_PurP_C"/>
</dbReference>
<dbReference type="InterPro" id="IPR010672">
    <property type="entry name" value="IMP_biosynth_PurP_N"/>
</dbReference>
<dbReference type="InterPro" id="IPR016185">
    <property type="entry name" value="PreATP-grasp_dom_sf"/>
</dbReference>
<dbReference type="NCBIfam" id="NF009780">
    <property type="entry name" value="PRK13278.1-5"/>
    <property type="match status" value="1"/>
</dbReference>
<dbReference type="PANTHER" id="PTHR38147:SF2">
    <property type="entry name" value="5-FORMAMINOIMIDAZOLE-4-CARBOXAMIDE-1-(BETA)-D-RIBOFURANOSYL 5'-MONOPHOSPHATE SYNTHETASE"/>
    <property type="match status" value="1"/>
</dbReference>
<dbReference type="PANTHER" id="PTHR38147">
    <property type="entry name" value="5-FORMAMINOIMIDAZOLE-4-CARBOXAMIDE-1-(BETA)-D-RIBOFURANOSYL 5'-MONOPHOSPHATE SYNTHETASE-RELATED"/>
    <property type="match status" value="1"/>
</dbReference>
<dbReference type="Pfam" id="PF06849">
    <property type="entry name" value="DUF1246"/>
    <property type="match status" value="1"/>
</dbReference>
<dbReference type="Pfam" id="PF06973">
    <property type="entry name" value="DUF1297"/>
    <property type="match status" value="1"/>
</dbReference>
<dbReference type="PIRSF" id="PIRSF004602">
    <property type="entry name" value="ATPgrasp_PurP"/>
    <property type="match status" value="1"/>
</dbReference>
<dbReference type="SUPFAM" id="SSF56059">
    <property type="entry name" value="Glutathione synthetase ATP-binding domain-like"/>
    <property type="match status" value="1"/>
</dbReference>
<dbReference type="SUPFAM" id="SSF52440">
    <property type="entry name" value="PreATP-grasp domain"/>
    <property type="match status" value="1"/>
</dbReference>
<protein>
    <recommendedName>
        <fullName evidence="2">5-formaminoimidazole-4-carboxamide-1-(beta)-D-ribofuranosyl 5'-monophosphate synthetase</fullName>
        <ecNumber evidence="2">6.3.4.23</ecNumber>
    </recommendedName>
    <alternativeName>
        <fullName evidence="2">5-aminoimidazole-4-carboxamide-1-beta-D-ribofuranosyl 5'-monophosphate--formate ligase</fullName>
    </alternativeName>
</protein>
<sequence length="361" mass="40468">MIPKEEIMGIFEKYNKDEVTIVTVGSHTSLHILKGAKLEGFSTAVITTRDRDIPYKRFGVADKFIYVDKFSDISKEEIQQQLRDMNAIIVPHGSFIAYCGLDNVEDTFKVPMFGNRAILRWEAERDLEGQLLGGSGLRIPKKYGGPDDIDGPVMVKFPGARGGRGYFPCSTVEEFWRKIGEFKAKGILTEDDVKKAHIEEYVVGANYCIHYFYSPLKDQVELMGIDRRYESSIDGLVRVPAKDQLELSIDPSYVITGNFPVVIRESLLPQVFDMGDKLATKAKELVKPGMLGPFCLQSLCNENLELVVFEMSARVDGGTNTFMNGSPYSCLYTGEPLSMGQRIAKEIKLALELKMIDKVIS</sequence>
<name>PURP_METM6</name>
<accession>A9A9U0</accession>
<feature type="chain" id="PRO_0000348622" description="5-formaminoimidazole-4-carboxamide-1-(beta)-D-ribofuranosyl 5'-monophosphate synthetase">
    <location>
        <begin position="1"/>
        <end position="361"/>
    </location>
</feature>
<feature type="domain" description="ATP-grasp" evidence="2">
    <location>
        <begin position="116"/>
        <end position="348"/>
    </location>
</feature>
<feature type="binding site" evidence="2">
    <location>
        <position position="27"/>
    </location>
    <ligand>
        <name>5-amino-1-(5-phospho-beta-D-ribosyl)imidazole-4-carboxamide</name>
        <dbReference type="ChEBI" id="CHEBI:58475"/>
    </ligand>
</feature>
<feature type="binding site" evidence="2">
    <location>
        <position position="94"/>
    </location>
    <ligand>
        <name>5-amino-1-(5-phospho-beta-D-ribosyl)imidazole-4-carboxamide</name>
        <dbReference type="ChEBI" id="CHEBI:58475"/>
    </ligand>
</feature>
<feature type="binding site" evidence="2">
    <location>
        <begin position="146"/>
        <end position="208"/>
    </location>
    <ligand>
        <name>ATP</name>
        <dbReference type="ChEBI" id="CHEBI:30616"/>
    </ligand>
</feature>
<feature type="binding site" evidence="2">
    <location>
        <position position="230"/>
    </location>
    <ligand>
        <name>ATP</name>
        <dbReference type="ChEBI" id="CHEBI:30616"/>
    </ligand>
</feature>
<feature type="binding site" evidence="2">
    <location>
        <position position="258"/>
    </location>
    <ligand>
        <name>5-amino-1-(5-phospho-beta-D-ribosyl)imidazole-4-carboxamide</name>
        <dbReference type="ChEBI" id="CHEBI:58475"/>
    </ligand>
</feature>
<feature type="binding site" evidence="2">
    <location>
        <position position="297"/>
    </location>
    <ligand>
        <name>Mg(2+)</name>
        <dbReference type="ChEBI" id="CHEBI:18420"/>
    </ligand>
</feature>
<feature type="binding site" evidence="2">
    <location>
        <position position="310"/>
    </location>
    <ligand>
        <name>Mg(2+)</name>
        <dbReference type="ChEBI" id="CHEBI:18420"/>
    </ligand>
</feature>
<organism>
    <name type="scientific">Methanococcus maripaludis (strain C6 / ATCC BAA-1332)</name>
    <dbReference type="NCBI Taxonomy" id="444158"/>
    <lineage>
        <taxon>Archaea</taxon>
        <taxon>Methanobacteriati</taxon>
        <taxon>Methanobacteriota</taxon>
        <taxon>Methanomada group</taxon>
        <taxon>Methanococci</taxon>
        <taxon>Methanococcales</taxon>
        <taxon>Methanococcaceae</taxon>
        <taxon>Methanococcus</taxon>
    </lineage>
</organism>